<organism>
    <name type="scientific">Pyrococcus furiosus (strain ATCC 43587 / DSM 3638 / JCM 8422 / Vc1)</name>
    <dbReference type="NCBI Taxonomy" id="186497"/>
    <lineage>
        <taxon>Archaea</taxon>
        <taxon>Methanobacteriati</taxon>
        <taxon>Methanobacteriota</taxon>
        <taxon>Thermococci</taxon>
        <taxon>Thermococcales</taxon>
        <taxon>Thermococcaceae</taxon>
        <taxon>Pyrococcus</taxon>
    </lineage>
</organism>
<dbReference type="EMBL" id="AE009950">
    <property type="protein sequence ID" value="AAL81683.1"/>
    <property type="molecule type" value="Genomic_DNA"/>
</dbReference>
<dbReference type="RefSeq" id="WP_010867743.1">
    <property type="nucleotide sequence ID" value="NZ_CP023154.1"/>
</dbReference>
<dbReference type="PDB" id="4V6U">
    <property type="method" value="EM"/>
    <property type="resolution" value="6.60 A"/>
    <property type="chains" value="AN=1-147"/>
</dbReference>
<dbReference type="PDBsum" id="4V6U"/>
<dbReference type="EMDB" id="EMD-50611"/>
<dbReference type="EMDB" id="EMD-50612"/>
<dbReference type="EMDB" id="EMD-50613"/>
<dbReference type="SMR" id="P61995"/>
<dbReference type="STRING" id="186497.PF1559"/>
<dbReference type="PaxDb" id="186497-PF1559"/>
<dbReference type="KEGG" id="pfu:PF1559"/>
<dbReference type="PATRIC" id="fig|186497.12.peg.1625"/>
<dbReference type="eggNOG" id="arCOG04255">
    <property type="taxonomic scope" value="Archaea"/>
</dbReference>
<dbReference type="HOGENOM" id="CLU_115574_0_1_2"/>
<dbReference type="OrthoDB" id="45154at2157"/>
<dbReference type="PhylomeDB" id="P61995"/>
<dbReference type="Proteomes" id="UP000001013">
    <property type="component" value="Chromosome"/>
</dbReference>
<dbReference type="GO" id="GO:0015935">
    <property type="term" value="C:small ribosomal subunit"/>
    <property type="evidence" value="ECO:0007669"/>
    <property type="project" value="InterPro"/>
</dbReference>
<dbReference type="GO" id="GO:0019843">
    <property type="term" value="F:rRNA binding"/>
    <property type="evidence" value="ECO:0007669"/>
    <property type="project" value="UniProtKB-UniRule"/>
</dbReference>
<dbReference type="GO" id="GO:0003735">
    <property type="term" value="F:structural constituent of ribosome"/>
    <property type="evidence" value="ECO:0007669"/>
    <property type="project" value="InterPro"/>
</dbReference>
<dbReference type="GO" id="GO:0006412">
    <property type="term" value="P:translation"/>
    <property type="evidence" value="ECO:0007669"/>
    <property type="project" value="UniProtKB-UniRule"/>
</dbReference>
<dbReference type="CDD" id="cd03367">
    <property type="entry name" value="Ribosomal_S23"/>
    <property type="match status" value="1"/>
</dbReference>
<dbReference type="FunFam" id="2.40.50.140:FF:000007">
    <property type="entry name" value="40S ribosomal protein S23"/>
    <property type="match status" value="1"/>
</dbReference>
<dbReference type="Gene3D" id="2.40.50.140">
    <property type="entry name" value="Nucleic acid-binding proteins"/>
    <property type="match status" value="1"/>
</dbReference>
<dbReference type="HAMAP" id="MF_00403_A">
    <property type="entry name" value="Ribosomal_uS12_A"/>
    <property type="match status" value="1"/>
</dbReference>
<dbReference type="InterPro" id="IPR012340">
    <property type="entry name" value="NA-bd_OB-fold"/>
</dbReference>
<dbReference type="InterPro" id="IPR006032">
    <property type="entry name" value="Ribosomal_uS12"/>
</dbReference>
<dbReference type="InterPro" id="IPR022863">
    <property type="entry name" value="Ribosomal_uS12_arc"/>
</dbReference>
<dbReference type="InterPro" id="IPR005680">
    <property type="entry name" value="Ribosomal_uS12_euk/arc"/>
</dbReference>
<dbReference type="NCBIfam" id="NF003254">
    <property type="entry name" value="PRK04211.1"/>
    <property type="match status" value="1"/>
</dbReference>
<dbReference type="NCBIfam" id="TIGR00982">
    <property type="entry name" value="uS12_E_A"/>
    <property type="match status" value="1"/>
</dbReference>
<dbReference type="PANTHER" id="PTHR11652">
    <property type="entry name" value="30S RIBOSOMAL PROTEIN S12 FAMILY MEMBER"/>
    <property type="match status" value="1"/>
</dbReference>
<dbReference type="Pfam" id="PF00164">
    <property type="entry name" value="Ribosom_S12_S23"/>
    <property type="match status" value="1"/>
</dbReference>
<dbReference type="PIRSF" id="PIRSF002133">
    <property type="entry name" value="Ribosomal_S12/S23"/>
    <property type="match status" value="1"/>
</dbReference>
<dbReference type="SUPFAM" id="SSF50249">
    <property type="entry name" value="Nucleic acid-binding proteins"/>
    <property type="match status" value="1"/>
</dbReference>
<sequence length="147" mass="16439">MPGKKAPNGEFAGRKLKLKRKKFRWSDIRYKRRVLRLKEKSDPLEGAPQARGIVLEKIAVEAKQPNSGMRKAVRVQLIKNGKVVTAFCPGDGAIKFIDEHDEVIIEGIGGPKGGSMGDIPGIRYKVVKVNRVSLKELVKGRKEKPRR</sequence>
<reference key="1">
    <citation type="journal article" date="1999" name="Genetics">
        <title>Divergence of the hyperthermophilic archaea Pyrococcus furiosus and P. horikoshii inferred from complete genomic sequences.</title>
        <authorList>
            <person name="Maeder D.L."/>
            <person name="Weiss R.B."/>
            <person name="Dunn D.M."/>
            <person name="Cherry J.L."/>
            <person name="Gonzalez J.M."/>
            <person name="DiRuggiero J."/>
            <person name="Robb F.T."/>
        </authorList>
    </citation>
    <scope>NUCLEOTIDE SEQUENCE [LARGE SCALE GENOMIC DNA]</scope>
    <source>
        <strain>ATCC 43587 / DSM 3638 / JCM 8422 / Vc1</strain>
    </source>
</reference>
<reference evidence="3" key="2">
    <citation type="journal article" date="2013" name="Nucleic Acids Res.">
        <title>Promiscuous behaviour of archaeal ribosomal proteins: implications for eukaryotic ribosome evolution.</title>
        <authorList>
            <person name="Armache J.P."/>
            <person name="Anger A.M."/>
            <person name="Marquez V."/>
            <person name="Franckenberg S."/>
            <person name="Frohlich T."/>
            <person name="Villa E."/>
            <person name="Berninghausen O."/>
            <person name="Thomm M."/>
            <person name="Arnold G.J."/>
            <person name="Beckmann R."/>
            <person name="Wilson D.N."/>
        </authorList>
    </citation>
    <scope>STRUCTURE BY ELECTRON MICROSCOPY (6.60 ANGSTROMS) IN THE 70S RIBOSOME</scope>
    <scope>SUBUNIT</scope>
</reference>
<feature type="chain" id="PRO_0000146378" description="Small ribosomal subunit protein uS12">
    <location>
        <begin position="1"/>
        <end position="147"/>
    </location>
</feature>
<gene>
    <name evidence="1" type="primary">rps12</name>
    <name type="ordered locus">PF1559</name>
</gene>
<comment type="function">
    <text evidence="1">With S4 and S5 plays an important role in translational accuracy. Located at the interface of the 30S and 50S subunits.</text>
</comment>
<comment type="subunit">
    <text evidence="1 2">Part of the 30S ribosomal subunit.</text>
</comment>
<comment type="similarity">
    <text evidence="1">Belongs to the universal ribosomal protein uS12 family.</text>
</comment>
<proteinExistence type="evidence at protein level"/>
<keyword id="KW-0002">3D-structure</keyword>
<keyword id="KW-1185">Reference proteome</keyword>
<keyword id="KW-0687">Ribonucleoprotein</keyword>
<keyword id="KW-0689">Ribosomal protein</keyword>
<keyword id="KW-0694">RNA-binding</keyword>
<keyword id="KW-0699">rRNA-binding</keyword>
<name>RS12_PYRFU</name>
<protein>
    <recommendedName>
        <fullName evidence="1">Small ribosomal subunit protein uS12</fullName>
    </recommendedName>
    <alternativeName>
        <fullName>30S ribosomal protein S12</fullName>
    </alternativeName>
</protein>
<evidence type="ECO:0000255" key="1">
    <source>
        <dbReference type="HAMAP-Rule" id="MF_00403"/>
    </source>
</evidence>
<evidence type="ECO:0000269" key="2">
    <source>
    </source>
</evidence>
<evidence type="ECO:0007744" key="3">
    <source>
        <dbReference type="PDB" id="4V6U"/>
    </source>
</evidence>
<accession>P61995</accession>
<accession>Q9V110</accession>